<protein>
    <recommendedName>
        <fullName>Nickel/cobalt efflux system RcnA</fullName>
    </recommendedName>
</protein>
<name>RCNA_ECOK1</name>
<sequence>MTEFTTLLQQGNAWFFIPSAILLGALHGLEPGHSKTMMAAFIIAIKGTIKQAVMLGLAATISHTAVVWLIAFGGMVISKRFTAQSAEPWLQLISAVIIISTAFWMFWRTWRGERNWLENMHEHDHEHHHHDHEDHHDHGHHHHHEHGEYQDAHARAHANDIKRRFDGREVTNWQILLFGLTGGLIPCPAAITVLLICIQLKALTLGATLVVSFSLGLALTLVTVGVGAAISVQQVAKRWSGFNTLAKRAPYFSSLLIGLVGVYMGVHGFMGIMR</sequence>
<organism>
    <name type="scientific">Escherichia coli O1:K1 / APEC</name>
    <dbReference type="NCBI Taxonomy" id="405955"/>
    <lineage>
        <taxon>Bacteria</taxon>
        <taxon>Pseudomonadati</taxon>
        <taxon>Pseudomonadota</taxon>
        <taxon>Gammaproteobacteria</taxon>
        <taxon>Enterobacterales</taxon>
        <taxon>Enterobacteriaceae</taxon>
        <taxon>Escherichia</taxon>
    </lineage>
</organism>
<gene>
    <name type="primary">rcnA</name>
    <name type="ordered locus">Ecok1_20170</name>
    <name type="ORF">APECO1_4440</name>
</gene>
<dbReference type="EMBL" id="CP000468">
    <property type="protein sequence ID" value="ABJ01511.1"/>
    <property type="molecule type" value="Genomic_DNA"/>
</dbReference>
<dbReference type="RefSeq" id="WP_000134614.1">
    <property type="nucleotide sequence ID" value="NZ_CADILS010000067.1"/>
</dbReference>
<dbReference type="KEGG" id="ecv:APECO1_4440"/>
<dbReference type="HOGENOM" id="CLU_058605_2_0_6"/>
<dbReference type="Proteomes" id="UP000008216">
    <property type="component" value="Chromosome"/>
</dbReference>
<dbReference type="GO" id="GO:0005886">
    <property type="term" value="C:plasma membrane"/>
    <property type="evidence" value="ECO:0007669"/>
    <property type="project" value="UniProtKB-SubCell"/>
</dbReference>
<dbReference type="GO" id="GO:0046583">
    <property type="term" value="F:monoatomic cation efflux transmembrane transporter activity"/>
    <property type="evidence" value="ECO:0007669"/>
    <property type="project" value="TreeGrafter"/>
</dbReference>
<dbReference type="GO" id="GO:0015099">
    <property type="term" value="F:nickel cation transmembrane transporter activity"/>
    <property type="evidence" value="ECO:0007669"/>
    <property type="project" value="InterPro"/>
</dbReference>
<dbReference type="GO" id="GO:0006824">
    <property type="term" value="P:cobalt ion transport"/>
    <property type="evidence" value="ECO:0007669"/>
    <property type="project" value="UniProtKB-KW"/>
</dbReference>
<dbReference type="GO" id="GO:0032025">
    <property type="term" value="P:response to cobalt ion"/>
    <property type="evidence" value="ECO:0007669"/>
    <property type="project" value="TreeGrafter"/>
</dbReference>
<dbReference type="GO" id="GO:0010045">
    <property type="term" value="P:response to nickel cation"/>
    <property type="evidence" value="ECO:0007669"/>
    <property type="project" value="TreeGrafter"/>
</dbReference>
<dbReference type="InterPro" id="IPR011541">
    <property type="entry name" value="Ni/Co_transpt_high_affinity"/>
</dbReference>
<dbReference type="InterPro" id="IPR051224">
    <property type="entry name" value="NiCoT_RcnA"/>
</dbReference>
<dbReference type="NCBIfam" id="NF007454">
    <property type="entry name" value="PRK10019.1"/>
    <property type="match status" value="1"/>
</dbReference>
<dbReference type="PANTHER" id="PTHR40659">
    <property type="entry name" value="NICKEL/COBALT EFFLUX SYSTEM RCNA"/>
    <property type="match status" value="1"/>
</dbReference>
<dbReference type="PANTHER" id="PTHR40659:SF1">
    <property type="entry name" value="NICKEL_COBALT EFFLUX SYSTEM RCNA"/>
    <property type="match status" value="1"/>
</dbReference>
<dbReference type="Pfam" id="PF03824">
    <property type="entry name" value="NicO"/>
    <property type="match status" value="1"/>
</dbReference>
<evidence type="ECO:0000250" key="1"/>
<evidence type="ECO:0000255" key="2"/>
<evidence type="ECO:0000256" key="3">
    <source>
        <dbReference type="SAM" id="MobiDB-lite"/>
    </source>
</evidence>
<evidence type="ECO:0000305" key="4"/>
<comment type="function">
    <text evidence="1">Efflux system for nickel and cobalt.</text>
</comment>
<comment type="subcellular location">
    <subcellularLocation>
        <location evidence="1">Cell inner membrane</location>
        <topology evidence="1">Multi-pass membrane protein</topology>
    </subcellularLocation>
</comment>
<comment type="induction">
    <text evidence="1">By nickel and cobalt. Transcriptionally repressed by RcnR (By similarity).</text>
</comment>
<comment type="similarity">
    <text evidence="4">Belongs to the NiCoT transporter (TC 2.A.52) family. RcnA subfamily.</text>
</comment>
<keyword id="KW-0997">Cell inner membrane</keyword>
<keyword id="KW-1003">Cell membrane</keyword>
<keyword id="KW-0170">Cobalt</keyword>
<keyword id="KW-0171">Cobalt transport</keyword>
<keyword id="KW-0406">Ion transport</keyword>
<keyword id="KW-0472">Membrane</keyword>
<keyword id="KW-0533">Nickel</keyword>
<keyword id="KW-0921">Nickel transport</keyword>
<keyword id="KW-1185">Reference proteome</keyword>
<keyword id="KW-0812">Transmembrane</keyword>
<keyword id="KW-1133">Transmembrane helix</keyword>
<keyword id="KW-0813">Transport</keyword>
<feature type="chain" id="PRO_0000333784" description="Nickel/cobalt efflux system RcnA">
    <location>
        <begin position="1"/>
        <end position="274"/>
    </location>
</feature>
<feature type="topological domain" description="Periplasmic" evidence="2">
    <location>
        <begin position="1"/>
        <end position="12"/>
    </location>
</feature>
<feature type="transmembrane region" description="Helical" evidence="2">
    <location>
        <begin position="13"/>
        <end position="33"/>
    </location>
</feature>
<feature type="topological domain" description="Cytoplasmic" evidence="2">
    <location>
        <begin position="34"/>
        <end position="56"/>
    </location>
</feature>
<feature type="transmembrane region" description="Helical" evidence="2">
    <location>
        <begin position="57"/>
        <end position="77"/>
    </location>
</feature>
<feature type="topological domain" description="Periplasmic" evidence="2">
    <location>
        <begin position="78"/>
        <end position="86"/>
    </location>
</feature>
<feature type="transmembrane region" description="Helical" evidence="2">
    <location>
        <begin position="87"/>
        <end position="107"/>
    </location>
</feature>
<feature type="topological domain" description="Cytoplasmic" evidence="2">
    <location>
        <begin position="108"/>
        <end position="174"/>
    </location>
</feature>
<feature type="transmembrane region" description="Helical" evidence="2">
    <location>
        <begin position="175"/>
        <end position="195"/>
    </location>
</feature>
<feature type="topological domain" description="Periplasmic" evidence="2">
    <location>
        <begin position="196"/>
        <end position="209"/>
    </location>
</feature>
<feature type="transmembrane region" description="Helical" evidence="2">
    <location>
        <begin position="210"/>
        <end position="230"/>
    </location>
</feature>
<feature type="topological domain" description="Cytoplasmic" evidence="2">
    <location>
        <begin position="231"/>
        <end position="251"/>
    </location>
</feature>
<feature type="transmembrane region" description="Helical" evidence="2">
    <location>
        <begin position="252"/>
        <end position="272"/>
    </location>
</feature>
<feature type="topological domain" description="Periplasmic" evidence="2">
    <location>
        <begin position="273"/>
        <end position="274"/>
    </location>
</feature>
<feature type="region of interest" description="Disordered" evidence="3">
    <location>
        <begin position="127"/>
        <end position="153"/>
    </location>
</feature>
<feature type="compositionally biased region" description="Basic and acidic residues" evidence="3">
    <location>
        <begin position="127"/>
        <end position="137"/>
    </location>
</feature>
<proteinExistence type="inferred from homology"/>
<accession>A1ACX1</accession>
<reference key="1">
    <citation type="journal article" date="2007" name="J. Bacteriol.">
        <title>The genome sequence of avian pathogenic Escherichia coli strain O1:K1:H7 shares strong similarities with human extraintestinal pathogenic E. coli genomes.</title>
        <authorList>
            <person name="Johnson T.J."/>
            <person name="Kariyawasam S."/>
            <person name="Wannemuehler Y."/>
            <person name="Mangiamele P."/>
            <person name="Johnson S.J."/>
            <person name="Doetkott C."/>
            <person name="Skyberg J.A."/>
            <person name="Lynne A.M."/>
            <person name="Johnson J.R."/>
            <person name="Nolan L.K."/>
        </authorList>
    </citation>
    <scope>NUCLEOTIDE SEQUENCE [LARGE SCALE GENOMIC DNA]</scope>
</reference>